<accession>A4JIA2</accession>
<evidence type="ECO:0000255" key="1">
    <source>
        <dbReference type="HAMAP-Rule" id="MF_00123"/>
    </source>
</evidence>
<protein>
    <recommendedName>
        <fullName evidence="1">Arginine--tRNA ligase</fullName>
        <ecNumber evidence="1">6.1.1.19</ecNumber>
    </recommendedName>
    <alternativeName>
        <fullName evidence="1">Arginyl-tRNA synthetase</fullName>
        <shortName evidence="1">ArgRS</shortName>
    </alternativeName>
</protein>
<sequence length="593" mass="64409">MLPAHKQTLEALLADSVAQVAHALKGADAEFVIPAITLERPKVAAHGDVACNVAMQLAKPLGTNPRQLAERIVAALVAQPAAQGLVDAAEIAGPGFINLRVSAAAKQAVIAAVFEQGRAFGTSQREKGKRVLVEFVSANPTGPLHVGHGRQAALGDVLANVIASQGYAVHREFYYNDAGVQIANLAISTQARARGLKPGDAGWPEAAYNGEYIADIARDYLNGATVAAKDGEPVTGARDIENLDAIRKFAVAYLRHEQDMDLQAFGVKFDQYYLESSLYSEGRVEKTVDALVKAGMTYEQDGALWLRTTDEGDDKDRVMRKSDGTYTYFVPDVAYHVTKWERGFTKVINIQGSDHHGTIARVRAGLQGLHIGIPKGYPDYVLHKMVTVMRDGQEVKLSKRAGSYVTVRDLIEWSGGAAPGQEAAPDMIDEATITRGRDAVRFFLISRKADTEFVFDIDLALKQNDENPVYYVQYAHARICSVLNELKARYNVDVAQLPGADLSQLTSPQAVSLMQKLAEYPDLLTHAANELAPHAVAFYLRDLAGEFHSFYNAERVLVDDEAPRNARAALLAATRQVLENGLAMLGVSAPAKM</sequence>
<proteinExistence type="inferred from homology"/>
<reference key="1">
    <citation type="submission" date="2007-03" db="EMBL/GenBank/DDBJ databases">
        <title>Complete sequence of chromosome 1 of Burkholderia vietnamiensis G4.</title>
        <authorList>
            <consortium name="US DOE Joint Genome Institute"/>
            <person name="Copeland A."/>
            <person name="Lucas S."/>
            <person name="Lapidus A."/>
            <person name="Barry K."/>
            <person name="Detter J.C."/>
            <person name="Glavina del Rio T."/>
            <person name="Hammon N."/>
            <person name="Israni S."/>
            <person name="Dalin E."/>
            <person name="Tice H."/>
            <person name="Pitluck S."/>
            <person name="Chain P."/>
            <person name="Malfatti S."/>
            <person name="Shin M."/>
            <person name="Vergez L."/>
            <person name="Schmutz J."/>
            <person name="Larimer F."/>
            <person name="Land M."/>
            <person name="Hauser L."/>
            <person name="Kyrpides N."/>
            <person name="Tiedje J."/>
            <person name="Richardson P."/>
        </authorList>
    </citation>
    <scope>NUCLEOTIDE SEQUENCE [LARGE SCALE GENOMIC DNA]</scope>
    <source>
        <strain>G4 / LMG 22486</strain>
    </source>
</reference>
<comment type="catalytic activity">
    <reaction evidence="1">
        <text>tRNA(Arg) + L-arginine + ATP = L-arginyl-tRNA(Arg) + AMP + diphosphate</text>
        <dbReference type="Rhea" id="RHEA:20301"/>
        <dbReference type="Rhea" id="RHEA-COMP:9658"/>
        <dbReference type="Rhea" id="RHEA-COMP:9673"/>
        <dbReference type="ChEBI" id="CHEBI:30616"/>
        <dbReference type="ChEBI" id="CHEBI:32682"/>
        <dbReference type="ChEBI" id="CHEBI:33019"/>
        <dbReference type="ChEBI" id="CHEBI:78442"/>
        <dbReference type="ChEBI" id="CHEBI:78513"/>
        <dbReference type="ChEBI" id="CHEBI:456215"/>
        <dbReference type="EC" id="6.1.1.19"/>
    </reaction>
</comment>
<comment type="subunit">
    <text evidence="1">Monomer.</text>
</comment>
<comment type="subcellular location">
    <subcellularLocation>
        <location evidence="1">Cytoplasm</location>
    </subcellularLocation>
</comment>
<comment type="similarity">
    <text evidence="1">Belongs to the class-I aminoacyl-tRNA synthetase family.</text>
</comment>
<gene>
    <name evidence="1" type="primary">argS</name>
    <name type="ordered locus">Bcep1808_3014</name>
</gene>
<dbReference type="EC" id="6.1.1.19" evidence="1"/>
<dbReference type="EMBL" id="CP000614">
    <property type="protein sequence ID" value="ABO56005.1"/>
    <property type="molecule type" value="Genomic_DNA"/>
</dbReference>
<dbReference type="SMR" id="A4JIA2"/>
<dbReference type="KEGG" id="bvi:Bcep1808_3014"/>
<dbReference type="eggNOG" id="COG0018">
    <property type="taxonomic scope" value="Bacteria"/>
</dbReference>
<dbReference type="HOGENOM" id="CLU_006406_0_1_4"/>
<dbReference type="Proteomes" id="UP000002287">
    <property type="component" value="Chromosome 1"/>
</dbReference>
<dbReference type="GO" id="GO:0005737">
    <property type="term" value="C:cytoplasm"/>
    <property type="evidence" value="ECO:0007669"/>
    <property type="project" value="UniProtKB-SubCell"/>
</dbReference>
<dbReference type="GO" id="GO:0004814">
    <property type="term" value="F:arginine-tRNA ligase activity"/>
    <property type="evidence" value="ECO:0007669"/>
    <property type="project" value="UniProtKB-UniRule"/>
</dbReference>
<dbReference type="GO" id="GO:0005524">
    <property type="term" value="F:ATP binding"/>
    <property type="evidence" value="ECO:0007669"/>
    <property type="project" value="UniProtKB-UniRule"/>
</dbReference>
<dbReference type="GO" id="GO:0006420">
    <property type="term" value="P:arginyl-tRNA aminoacylation"/>
    <property type="evidence" value="ECO:0007669"/>
    <property type="project" value="UniProtKB-UniRule"/>
</dbReference>
<dbReference type="CDD" id="cd00671">
    <property type="entry name" value="ArgRS_core"/>
    <property type="match status" value="1"/>
</dbReference>
<dbReference type="FunFam" id="1.10.730.10:FF:000008">
    <property type="entry name" value="Arginine--tRNA ligase"/>
    <property type="match status" value="1"/>
</dbReference>
<dbReference type="FunFam" id="3.40.50.620:FF:000062">
    <property type="entry name" value="Arginine--tRNA ligase"/>
    <property type="match status" value="1"/>
</dbReference>
<dbReference type="Gene3D" id="3.30.1360.70">
    <property type="entry name" value="Arginyl tRNA synthetase N-terminal domain"/>
    <property type="match status" value="1"/>
</dbReference>
<dbReference type="Gene3D" id="3.40.50.620">
    <property type="entry name" value="HUPs"/>
    <property type="match status" value="1"/>
</dbReference>
<dbReference type="Gene3D" id="1.10.730.10">
    <property type="entry name" value="Isoleucyl-tRNA Synthetase, Domain 1"/>
    <property type="match status" value="1"/>
</dbReference>
<dbReference type="HAMAP" id="MF_00123">
    <property type="entry name" value="Arg_tRNA_synth"/>
    <property type="match status" value="1"/>
</dbReference>
<dbReference type="InterPro" id="IPR001412">
    <property type="entry name" value="aa-tRNA-synth_I_CS"/>
</dbReference>
<dbReference type="InterPro" id="IPR001278">
    <property type="entry name" value="Arg-tRNA-ligase"/>
</dbReference>
<dbReference type="InterPro" id="IPR005148">
    <property type="entry name" value="Arg-tRNA-synth_N"/>
</dbReference>
<dbReference type="InterPro" id="IPR036695">
    <property type="entry name" value="Arg-tRNA-synth_N_sf"/>
</dbReference>
<dbReference type="InterPro" id="IPR035684">
    <property type="entry name" value="ArgRS_core"/>
</dbReference>
<dbReference type="InterPro" id="IPR008909">
    <property type="entry name" value="DALR_anticod-bd"/>
</dbReference>
<dbReference type="InterPro" id="IPR014729">
    <property type="entry name" value="Rossmann-like_a/b/a_fold"/>
</dbReference>
<dbReference type="InterPro" id="IPR009080">
    <property type="entry name" value="tRNAsynth_Ia_anticodon-bd"/>
</dbReference>
<dbReference type="NCBIfam" id="TIGR00456">
    <property type="entry name" value="argS"/>
    <property type="match status" value="1"/>
</dbReference>
<dbReference type="PANTHER" id="PTHR11956:SF5">
    <property type="entry name" value="ARGININE--TRNA LIGASE, CYTOPLASMIC"/>
    <property type="match status" value="1"/>
</dbReference>
<dbReference type="PANTHER" id="PTHR11956">
    <property type="entry name" value="ARGINYL-TRNA SYNTHETASE"/>
    <property type="match status" value="1"/>
</dbReference>
<dbReference type="Pfam" id="PF03485">
    <property type="entry name" value="Arg_tRNA_synt_N"/>
    <property type="match status" value="1"/>
</dbReference>
<dbReference type="Pfam" id="PF05746">
    <property type="entry name" value="DALR_1"/>
    <property type="match status" value="1"/>
</dbReference>
<dbReference type="Pfam" id="PF00750">
    <property type="entry name" value="tRNA-synt_1d"/>
    <property type="match status" value="1"/>
</dbReference>
<dbReference type="PRINTS" id="PR01038">
    <property type="entry name" value="TRNASYNTHARG"/>
</dbReference>
<dbReference type="SMART" id="SM01016">
    <property type="entry name" value="Arg_tRNA_synt_N"/>
    <property type="match status" value="1"/>
</dbReference>
<dbReference type="SMART" id="SM00836">
    <property type="entry name" value="DALR_1"/>
    <property type="match status" value="1"/>
</dbReference>
<dbReference type="SUPFAM" id="SSF47323">
    <property type="entry name" value="Anticodon-binding domain of a subclass of class I aminoacyl-tRNA synthetases"/>
    <property type="match status" value="1"/>
</dbReference>
<dbReference type="SUPFAM" id="SSF55190">
    <property type="entry name" value="Arginyl-tRNA synthetase (ArgRS), N-terminal 'additional' domain"/>
    <property type="match status" value="1"/>
</dbReference>
<dbReference type="SUPFAM" id="SSF52374">
    <property type="entry name" value="Nucleotidylyl transferase"/>
    <property type="match status" value="1"/>
</dbReference>
<dbReference type="PROSITE" id="PS00178">
    <property type="entry name" value="AA_TRNA_LIGASE_I"/>
    <property type="match status" value="1"/>
</dbReference>
<feature type="chain" id="PRO_1000018005" description="Arginine--tRNA ligase">
    <location>
        <begin position="1"/>
        <end position="593"/>
    </location>
</feature>
<feature type="short sequence motif" description="'HIGH' region">
    <location>
        <begin position="138"/>
        <end position="148"/>
    </location>
</feature>
<name>SYR_BURVG</name>
<organism>
    <name type="scientific">Burkholderia vietnamiensis (strain G4 / LMG 22486)</name>
    <name type="common">Burkholderia cepacia (strain R1808)</name>
    <dbReference type="NCBI Taxonomy" id="269482"/>
    <lineage>
        <taxon>Bacteria</taxon>
        <taxon>Pseudomonadati</taxon>
        <taxon>Pseudomonadota</taxon>
        <taxon>Betaproteobacteria</taxon>
        <taxon>Burkholderiales</taxon>
        <taxon>Burkholderiaceae</taxon>
        <taxon>Burkholderia</taxon>
        <taxon>Burkholderia cepacia complex</taxon>
    </lineage>
</organism>
<keyword id="KW-0030">Aminoacyl-tRNA synthetase</keyword>
<keyword id="KW-0067">ATP-binding</keyword>
<keyword id="KW-0963">Cytoplasm</keyword>
<keyword id="KW-0436">Ligase</keyword>
<keyword id="KW-0547">Nucleotide-binding</keyword>
<keyword id="KW-0648">Protein biosynthesis</keyword>